<name>FABP5_MOUSE</name>
<organism>
    <name type="scientific">Mus musculus</name>
    <name type="common">Mouse</name>
    <dbReference type="NCBI Taxonomy" id="10090"/>
    <lineage>
        <taxon>Eukaryota</taxon>
        <taxon>Metazoa</taxon>
        <taxon>Chordata</taxon>
        <taxon>Craniata</taxon>
        <taxon>Vertebrata</taxon>
        <taxon>Euteleostomi</taxon>
        <taxon>Mammalia</taxon>
        <taxon>Eutheria</taxon>
        <taxon>Euarchontoglires</taxon>
        <taxon>Glires</taxon>
        <taxon>Rodentia</taxon>
        <taxon>Myomorpha</taxon>
        <taxon>Muroidea</taxon>
        <taxon>Muridae</taxon>
        <taxon>Murinae</taxon>
        <taxon>Mus</taxon>
        <taxon>Mus</taxon>
    </lineage>
</organism>
<protein>
    <recommendedName>
        <fullName evidence="13">Fatty acid-binding protein 5</fullName>
    </recommendedName>
    <alternativeName>
        <fullName>Epidermal-type fatty acid-binding protein</fullName>
        <shortName>E-FABP</shortName>
    </alternativeName>
    <alternativeName>
        <fullName>Fatty acid-binding protein, epidermal</fullName>
    </alternativeName>
    <alternativeName>
        <fullName evidence="12">Keratinocyte lipid-binding protein</fullName>
    </alternativeName>
    <alternativeName>
        <fullName>Psoriasis-associated fatty acid-binding protein homolog</fullName>
        <shortName>PA-FABP</shortName>
    </alternativeName>
</protein>
<evidence type="ECO:0000250" key="1"/>
<evidence type="ECO:0000250" key="2">
    <source>
        <dbReference type="UniProtKB" id="P55053"/>
    </source>
</evidence>
<evidence type="ECO:0000250" key="3">
    <source>
        <dbReference type="UniProtKB" id="Q01469"/>
    </source>
</evidence>
<evidence type="ECO:0000269" key="4">
    <source>
    </source>
</evidence>
<evidence type="ECO:0000269" key="5">
    <source>
    </source>
</evidence>
<evidence type="ECO:0000269" key="6">
    <source>
    </source>
</evidence>
<evidence type="ECO:0000269" key="7">
    <source>
    </source>
</evidence>
<evidence type="ECO:0000269" key="8">
    <source>
    </source>
</evidence>
<evidence type="ECO:0000269" key="9">
    <source>
    </source>
</evidence>
<evidence type="ECO:0000269" key="10">
    <source>
    </source>
</evidence>
<evidence type="ECO:0000303" key="11">
    <source>
    </source>
</evidence>
<evidence type="ECO:0000303" key="12">
    <source>
    </source>
</evidence>
<evidence type="ECO:0000305" key="13"/>
<evidence type="ECO:0000312" key="14">
    <source>
        <dbReference type="MGI" id="MGI:101790"/>
    </source>
</evidence>
<evidence type="ECO:0007744" key="15">
    <source>
        <dbReference type="PDB" id="4AZN"/>
    </source>
</evidence>
<evidence type="ECO:0007744" key="16">
    <source>
        <dbReference type="PDB" id="4AZO"/>
    </source>
</evidence>
<evidence type="ECO:0007744" key="17">
    <source>
        <dbReference type="PDB" id="4AZP"/>
    </source>
</evidence>
<evidence type="ECO:0007744" key="18">
    <source>
        <dbReference type="PDB" id="4AZQ"/>
    </source>
</evidence>
<evidence type="ECO:0007829" key="19">
    <source>
        <dbReference type="PDB" id="7FYW"/>
    </source>
</evidence>
<comment type="function">
    <text evidence="3 4 5 7 8 10">Intracellular carrier for long-chain fatty acids and related active lipids, such as endocannabinoids, that regulate the metabolism and actions of the ligands they bind (PubMed:12540600, PubMed:8608126). In addition to the cytosolic transport, selectively delivers specific fatty acids from the cytosol to the nucleus, wherein they activate nuclear receptors (By similarity). Delivers retinoic acid to the nuclear receptor peroxisome proliferator-activated receptor delta; which promotes proliferation and survival (PubMed:17512406). May also serve as a synaptic carrier of endocannabinoid at central synapses and thus controls retrograde endocannabinoid signaling (PubMed:29531087). Modulates inflammation by regulating PTGES induction via NF-kappa-B activation, and prostaglandin E2 (PGE2) biosynthesis during inflammation (PubMed:29440395). May be involved in keratinocyte differentiation (By similarity).</text>
</comment>
<comment type="catalytic activity">
    <reaction evidence="3">
        <text>hexadecanoate(out) = hexadecanoate(in)</text>
        <dbReference type="Rhea" id="RHEA:45256"/>
        <dbReference type="ChEBI" id="CHEBI:7896"/>
    </reaction>
</comment>
<comment type="catalytic activity">
    <reaction evidence="3">
        <text>(9Z,12Z)-octadecadienoate(out) = (9Z,12Z)-octadecadienoate(in)</text>
        <dbReference type="Rhea" id="RHEA:45264"/>
        <dbReference type="ChEBI" id="CHEBI:30245"/>
    </reaction>
</comment>
<comment type="catalytic activity">
    <reaction evidence="3">
        <text>(9Z)-octadecenoate(out) = (9Z)-octadecenoate(in)</text>
        <dbReference type="Rhea" id="RHEA:33655"/>
        <dbReference type="ChEBI" id="CHEBI:30823"/>
    </reaction>
</comment>
<comment type="subunit">
    <text evidence="10">Monomer.</text>
</comment>
<comment type="subcellular location">
    <subcellularLocation>
        <location evidence="5 8">Cytoplasm</location>
    </subcellularLocation>
    <subcellularLocation>
        <location evidence="5">Nucleus</location>
    </subcellularLocation>
    <subcellularLocation>
        <location evidence="8">Synapse</location>
    </subcellularLocation>
    <subcellularLocation>
        <location evidence="8">Postsynaptic density</location>
    </subcellularLocation>
    <subcellularLocation>
        <location evidence="8">Secreted</location>
    </subcellularLocation>
    <text evidence="3 8">Localizes primarily to the cytoplasm. Upon certain ligand binding, a conformation change exposes a nuclear localization motif and the protein is transported into nucleus (By similarity). Secreted by astrocytes, but not by neurons (PubMed:29531087).</text>
</comment>
<comment type="tissue specificity">
    <text evidence="9">Widely expressed.</text>
</comment>
<comment type="domain">
    <text evidence="1">Forms a beta-barrel structure that accommodates hydrophobic ligands in its interior.</text>
</comment>
<comment type="disruption phenotype">
    <text evidence="4">Deficient mice display resistance to diet-induced obesity, decreased adipose tissue and imporved glucose tolerance and insulin sensitivity.</text>
</comment>
<comment type="similarity">
    <text evidence="13">Belongs to the calycin superfamily. Fatty-acid binding protein (FABP) family.</text>
</comment>
<comment type="caution">
    <text evidence="6">While human FABP5 can exist as a monomer as well as a domain-swapped dimer, mouse is found only in the monomeric form.</text>
</comment>
<gene>
    <name evidence="14" type="primary">Fabp5</name>
    <name type="synonym">Fabpe</name>
    <name type="synonym">Klbp</name>
    <name evidence="11" type="synonym">Mal1</name>
</gene>
<keyword id="KW-0002">3D-structure</keyword>
<keyword id="KW-0007">Acetylation</keyword>
<keyword id="KW-0963">Cytoplasm</keyword>
<keyword id="KW-0903">Direct protein sequencing</keyword>
<keyword id="KW-1015">Disulfide bond</keyword>
<keyword id="KW-0445">Lipid transport</keyword>
<keyword id="KW-0446">Lipid-binding</keyword>
<keyword id="KW-0539">Nucleus</keyword>
<keyword id="KW-0597">Phosphoprotein</keyword>
<keyword id="KW-1185">Reference proteome</keyword>
<keyword id="KW-0964">Secreted</keyword>
<keyword id="KW-0770">Synapse</keyword>
<keyword id="KW-0813">Transport</keyword>
<proteinExistence type="evidence at protein level"/>
<reference key="1">
    <citation type="journal article" date="1993" name="J. Biol. Chem.">
        <title>Tumor-specific overexpression of a novel keratinocyte lipid-binding protein. Identification and characterization of a cloned sequence activated during multistage carcinogenesis in mouse skin.</title>
        <authorList>
            <person name="Krieg P."/>
            <person name="Feil S."/>
            <person name="Fuerstenberger G."/>
            <person name="Bowden T.G."/>
        </authorList>
    </citation>
    <scope>NUCLEOTIDE SEQUENCE [MRNA]</scope>
    <scope>TISSUE SPECIFICITY</scope>
    <source>
        <tissue>Keratinocyte</tissue>
    </source>
</reference>
<reference key="2">
    <citation type="journal article" date="1998" name="Gene">
        <title>Cloning and chromosomal localisation of the murine epidermal-type fatty acid binding protein gene (Fabpe).</title>
        <authorList>
            <person name="Bleck B."/>
            <person name="Hohoff C."/>
            <person name="Binas B."/>
            <person name="Rustow B."/>
            <person name="Dixkens C."/>
            <person name="Hameister H."/>
            <person name="Boerchers T."/>
            <person name="Spener F."/>
        </authorList>
    </citation>
    <scope>NUCLEOTIDE SEQUENCE [GENOMIC DNA]</scope>
    <source>
        <strain>129/SvJ</strain>
    </source>
</reference>
<reference key="3">
    <citation type="journal article" date="1998" name="Gene">
        <title>Cloning and chromosomal location of the murine Keratinocyte lipid-binding protein gene.</title>
        <authorList>
            <person name="Hertzel A.V."/>
            <person name="Bernlohr D.A."/>
        </authorList>
    </citation>
    <scope>NUCLEOTIDE SEQUENCE [GENOMIC DNA]</scope>
</reference>
<reference key="4">
    <citation type="journal article" date="2005" name="Science">
        <title>The transcriptional landscape of the mammalian genome.</title>
        <authorList>
            <person name="Carninci P."/>
            <person name="Kasukawa T."/>
            <person name="Katayama S."/>
            <person name="Gough J."/>
            <person name="Frith M.C."/>
            <person name="Maeda N."/>
            <person name="Oyama R."/>
            <person name="Ravasi T."/>
            <person name="Lenhard B."/>
            <person name="Wells C."/>
            <person name="Kodzius R."/>
            <person name="Shimokawa K."/>
            <person name="Bajic V.B."/>
            <person name="Brenner S.E."/>
            <person name="Batalov S."/>
            <person name="Forrest A.R."/>
            <person name="Zavolan M."/>
            <person name="Davis M.J."/>
            <person name="Wilming L.G."/>
            <person name="Aidinis V."/>
            <person name="Allen J.E."/>
            <person name="Ambesi-Impiombato A."/>
            <person name="Apweiler R."/>
            <person name="Aturaliya R.N."/>
            <person name="Bailey T.L."/>
            <person name="Bansal M."/>
            <person name="Baxter L."/>
            <person name="Beisel K.W."/>
            <person name="Bersano T."/>
            <person name="Bono H."/>
            <person name="Chalk A.M."/>
            <person name="Chiu K.P."/>
            <person name="Choudhary V."/>
            <person name="Christoffels A."/>
            <person name="Clutterbuck D.R."/>
            <person name="Crowe M.L."/>
            <person name="Dalla E."/>
            <person name="Dalrymple B.P."/>
            <person name="de Bono B."/>
            <person name="Della Gatta G."/>
            <person name="di Bernardo D."/>
            <person name="Down T."/>
            <person name="Engstrom P."/>
            <person name="Fagiolini M."/>
            <person name="Faulkner G."/>
            <person name="Fletcher C.F."/>
            <person name="Fukushima T."/>
            <person name="Furuno M."/>
            <person name="Futaki S."/>
            <person name="Gariboldi M."/>
            <person name="Georgii-Hemming P."/>
            <person name="Gingeras T.R."/>
            <person name="Gojobori T."/>
            <person name="Green R.E."/>
            <person name="Gustincich S."/>
            <person name="Harbers M."/>
            <person name="Hayashi Y."/>
            <person name="Hensch T.K."/>
            <person name="Hirokawa N."/>
            <person name="Hill D."/>
            <person name="Huminiecki L."/>
            <person name="Iacono M."/>
            <person name="Ikeo K."/>
            <person name="Iwama A."/>
            <person name="Ishikawa T."/>
            <person name="Jakt M."/>
            <person name="Kanapin A."/>
            <person name="Katoh M."/>
            <person name="Kawasawa Y."/>
            <person name="Kelso J."/>
            <person name="Kitamura H."/>
            <person name="Kitano H."/>
            <person name="Kollias G."/>
            <person name="Krishnan S.P."/>
            <person name="Kruger A."/>
            <person name="Kummerfeld S.K."/>
            <person name="Kurochkin I.V."/>
            <person name="Lareau L.F."/>
            <person name="Lazarevic D."/>
            <person name="Lipovich L."/>
            <person name="Liu J."/>
            <person name="Liuni S."/>
            <person name="McWilliam S."/>
            <person name="Madan Babu M."/>
            <person name="Madera M."/>
            <person name="Marchionni L."/>
            <person name="Matsuda H."/>
            <person name="Matsuzawa S."/>
            <person name="Miki H."/>
            <person name="Mignone F."/>
            <person name="Miyake S."/>
            <person name="Morris K."/>
            <person name="Mottagui-Tabar S."/>
            <person name="Mulder N."/>
            <person name="Nakano N."/>
            <person name="Nakauchi H."/>
            <person name="Ng P."/>
            <person name="Nilsson R."/>
            <person name="Nishiguchi S."/>
            <person name="Nishikawa S."/>
            <person name="Nori F."/>
            <person name="Ohara O."/>
            <person name="Okazaki Y."/>
            <person name="Orlando V."/>
            <person name="Pang K.C."/>
            <person name="Pavan W.J."/>
            <person name="Pavesi G."/>
            <person name="Pesole G."/>
            <person name="Petrovsky N."/>
            <person name="Piazza S."/>
            <person name="Reed J."/>
            <person name="Reid J.F."/>
            <person name="Ring B.Z."/>
            <person name="Ringwald M."/>
            <person name="Rost B."/>
            <person name="Ruan Y."/>
            <person name="Salzberg S.L."/>
            <person name="Sandelin A."/>
            <person name="Schneider C."/>
            <person name="Schoenbach C."/>
            <person name="Sekiguchi K."/>
            <person name="Semple C.A."/>
            <person name="Seno S."/>
            <person name="Sessa L."/>
            <person name="Sheng Y."/>
            <person name="Shibata Y."/>
            <person name="Shimada H."/>
            <person name="Shimada K."/>
            <person name="Silva D."/>
            <person name="Sinclair B."/>
            <person name="Sperling S."/>
            <person name="Stupka E."/>
            <person name="Sugiura K."/>
            <person name="Sultana R."/>
            <person name="Takenaka Y."/>
            <person name="Taki K."/>
            <person name="Tammoja K."/>
            <person name="Tan S.L."/>
            <person name="Tang S."/>
            <person name="Taylor M.S."/>
            <person name="Tegner J."/>
            <person name="Teichmann S.A."/>
            <person name="Ueda H.R."/>
            <person name="van Nimwegen E."/>
            <person name="Verardo R."/>
            <person name="Wei C.L."/>
            <person name="Yagi K."/>
            <person name="Yamanishi H."/>
            <person name="Zabarovsky E."/>
            <person name="Zhu S."/>
            <person name="Zimmer A."/>
            <person name="Hide W."/>
            <person name="Bult C."/>
            <person name="Grimmond S.M."/>
            <person name="Teasdale R.D."/>
            <person name="Liu E.T."/>
            <person name="Brusic V."/>
            <person name="Quackenbush J."/>
            <person name="Wahlestedt C."/>
            <person name="Mattick J.S."/>
            <person name="Hume D.A."/>
            <person name="Kai C."/>
            <person name="Sasaki D."/>
            <person name="Tomaru Y."/>
            <person name="Fukuda S."/>
            <person name="Kanamori-Katayama M."/>
            <person name="Suzuki M."/>
            <person name="Aoki J."/>
            <person name="Arakawa T."/>
            <person name="Iida J."/>
            <person name="Imamura K."/>
            <person name="Itoh M."/>
            <person name="Kato T."/>
            <person name="Kawaji H."/>
            <person name="Kawagashira N."/>
            <person name="Kawashima T."/>
            <person name="Kojima M."/>
            <person name="Kondo S."/>
            <person name="Konno H."/>
            <person name="Nakano K."/>
            <person name="Ninomiya N."/>
            <person name="Nishio T."/>
            <person name="Okada M."/>
            <person name="Plessy C."/>
            <person name="Shibata K."/>
            <person name="Shiraki T."/>
            <person name="Suzuki S."/>
            <person name="Tagami M."/>
            <person name="Waki K."/>
            <person name="Watahiki A."/>
            <person name="Okamura-Oho Y."/>
            <person name="Suzuki H."/>
            <person name="Kawai J."/>
            <person name="Hayashizaki Y."/>
        </authorList>
    </citation>
    <scope>NUCLEOTIDE SEQUENCE [LARGE SCALE MRNA]</scope>
    <source>
        <strain>C57BL/6J</strain>
        <tissue>Stomach</tissue>
    </source>
</reference>
<reference key="5">
    <citation type="journal article" date="2004" name="Genome Res.">
        <title>The status, quality, and expansion of the NIH full-length cDNA project: the Mammalian Gene Collection (MGC).</title>
        <authorList>
            <consortium name="The MGC Project Team"/>
        </authorList>
    </citation>
    <scope>NUCLEOTIDE SEQUENCE [LARGE SCALE MRNA]</scope>
    <source>
        <tissue>Mammary tumor</tissue>
    </source>
</reference>
<reference key="6">
    <citation type="submission" date="2007-03" db="UniProtKB">
        <authorList>
            <person name="Lubec G."/>
            <person name="Klug S."/>
        </authorList>
    </citation>
    <scope>PROTEIN SEQUENCE OF 13-24</scope>
    <scope>IDENTIFICATION BY MASS SPECTROMETRY</scope>
    <source>
        <tissue>Hippocampus</tissue>
    </source>
</reference>
<reference key="7">
    <citation type="journal article" date="1996" name="Biochemistry">
        <title>Expression, purification, and ligand-binding analysis of recombinant keratinocyte lipid-binding protein (MAL-1), an intracellular lipid-binding found overexpressed in neoplastic skin cells.</title>
        <authorList>
            <person name="Kane C.D."/>
            <person name="Coe N.R."/>
            <person name="Vanlandingham B."/>
            <person name="Krieg P."/>
            <person name="Bernlohr D.A."/>
        </authorList>
    </citation>
    <scope>SUBUNIT</scope>
    <scope>FUNCTION</scope>
</reference>
<reference key="8">
    <citation type="journal article" date="2003" name="Diabetes">
        <title>Role of the fatty acid binding protein mal1 in obesity and insulin resistance.</title>
        <authorList>
            <person name="Maeda K."/>
            <person name="Uysal K.T."/>
            <person name="Makowski L."/>
            <person name="Goerguen C.Z."/>
            <person name="Atsumi G."/>
            <person name="Parker R.A."/>
            <person name="Bruening J."/>
            <person name="Hertzel A.V."/>
            <person name="Bernlohr D.A."/>
            <person name="Hotamisligil G.S."/>
        </authorList>
    </citation>
    <scope>DISRUPTION PHENOTYPE</scope>
    <scope>FUNCTION</scope>
</reference>
<reference key="9">
    <citation type="journal article" date="2007" name="Cell">
        <title>Opposing effects of retinoic acid on cell growth result from alternate activation of two different nuclear receptors.</title>
        <authorList>
            <person name="Schug T.T."/>
            <person name="Berry D.C."/>
            <person name="Shaw N.S."/>
            <person name="Travis S.N."/>
            <person name="Noy N."/>
        </authorList>
    </citation>
    <scope>FUNCTION</scope>
    <scope>LIGAND-BINDING</scope>
    <scope>SUBCELLULAR LOCATION</scope>
</reference>
<reference key="10">
    <citation type="journal article" date="2010" name="Cell">
        <title>A tissue-specific atlas of mouse protein phosphorylation and expression.</title>
        <authorList>
            <person name="Huttlin E.L."/>
            <person name="Jedrychowski M.P."/>
            <person name="Elias J.E."/>
            <person name="Goswami T."/>
            <person name="Rad R."/>
            <person name="Beausoleil S.A."/>
            <person name="Villen J."/>
            <person name="Haas W."/>
            <person name="Sowa M.E."/>
            <person name="Gygi S.P."/>
        </authorList>
    </citation>
    <scope>IDENTIFICATION BY MASS SPECTROMETRY [LARGE SCALE ANALYSIS]</scope>
    <source>
        <tissue>Brain</tissue>
        <tissue>Brown adipose tissue</tissue>
        <tissue>Heart</tissue>
        <tissue>Kidney</tissue>
        <tissue>Liver</tissue>
        <tissue>Lung</tissue>
        <tissue>Pancreas</tissue>
        <tissue>Spleen</tissue>
        <tissue>Testis</tissue>
    </source>
</reference>
<reference key="11">
    <citation type="journal article" date="2018" name="J. Biol. Chem.">
        <title>Fatty acid-binding protein 5 controls microsomal prostaglandin E synthase 1 (mPGES-1) induction during inflammation.</title>
        <authorList>
            <person name="Bogdan D."/>
            <person name="Falcone J."/>
            <person name="Kanjiya M.P."/>
            <person name="Park S.H."/>
            <person name="Carbonetti G."/>
            <person name="Studholme K."/>
            <person name="Gomez M."/>
            <person name="Lu Y."/>
            <person name="Elmes M.W."/>
            <person name="Smietalo N."/>
            <person name="Yan S."/>
            <person name="Ojima I."/>
            <person name="Puopolo M."/>
            <person name="Kaczocha M."/>
        </authorList>
    </citation>
    <scope>FUNCTION</scope>
</reference>
<reference key="12">
    <citation type="journal article" date="2018" name="Proc. Natl. Acad. Sci. U.S.A.">
        <title>Fatty-acid-binding protein 5 controls retrograde endocannabinoid signaling at central glutamate synapses.</title>
        <authorList>
            <person name="Haj-Dahmane S."/>
            <person name="Shen R.Y."/>
            <person name="Elmes M.W."/>
            <person name="Studholme K."/>
            <person name="Kanjiya M.P."/>
            <person name="Bogdan D."/>
            <person name="Thanos P.K."/>
            <person name="Miyauchi J.T."/>
            <person name="Tsirka S.E."/>
            <person name="Deutsch D.G."/>
            <person name="Kaczocha M."/>
        </authorList>
    </citation>
    <scope>SUBCELLULAR LOCATION</scope>
    <scope>FUNCTION</scope>
</reference>
<reference evidence="15 16 17 18" key="13">
    <citation type="journal article" date="2014" name="Acta Crystallogr. D">
        <title>Crystallographic study of FABP5 as an intracellular endocannabinoid transporter.</title>
        <authorList>
            <person name="Sanson B."/>
            <person name="Wang T."/>
            <person name="Sun J."/>
            <person name="Wang L."/>
            <person name="Kaczocha M."/>
            <person name="Ojima I."/>
            <person name="Deutsch D."/>
            <person name="Li H."/>
        </authorList>
    </citation>
    <scope>X-RAY CRYSTALLOGRAPHY (2.00 ANGSTROMS) IN COMPLEXES WITH N-ARACHIDONOYLETHANOLAMIDE AND 2-ARACHIDONOYLGLYCEROL</scope>
    <scope>SUBUNIT</scope>
</reference>
<accession>Q05816</accession>
<dbReference type="EMBL" id="X70100">
    <property type="protein sequence ID" value="CAA49703.1"/>
    <property type="molecule type" value="mRNA"/>
</dbReference>
<dbReference type="EMBL" id="AJ223066">
    <property type="protein sequence ID" value="CAA11069.1"/>
    <property type="molecule type" value="Genomic_DNA"/>
</dbReference>
<dbReference type="EMBL" id="AF061015">
    <property type="protein sequence ID" value="AAC82368.1"/>
    <property type="molecule type" value="Genomic_DNA"/>
</dbReference>
<dbReference type="EMBL" id="AF061014">
    <property type="protein sequence ID" value="AAC82368.1"/>
    <property type="status" value="JOINED"/>
    <property type="molecule type" value="Genomic_DNA"/>
</dbReference>
<dbReference type="EMBL" id="AK008782">
    <property type="protein sequence ID" value="BAB25890.1"/>
    <property type="molecule type" value="mRNA"/>
</dbReference>
<dbReference type="EMBL" id="AK011551">
    <property type="protein sequence ID" value="BAB27692.1"/>
    <property type="molecule type" value="mRNA"/>
</dbReference>
<dbReference type="EMBL" id="BC002008">
    <property type="protein sequence ID" value="AAH02008.1"/>
    <property type="molecule type" value="mRNA"/>
</dbReference>
<dbReference type="CCDS" id="CCDS38388.1"/>
<dbReference type="PIR" id="A47497">
    <property type="entry name" value="A47497"/>
</dbReference>
<dbReference type="RefSeq" id="NP_034764.1">
    <property type="nucleotide sequence ID" value="NM_010634.3"/>
</dbReference>
<dbReference type="PDB" id="4AZN">
    <property type="method" value="X-ray"/>
    <property type="resolution" value="2.51 A"/>
    <property type="chains" value="A/B=1-135"/>
</dbReference>
<dbReference type="PDB" id="4AZO">
    <property type="method" value="X-ray"/>
    <property type="resolution" value="2.33 A"/>
    <property type="chains" value="A=1-135"/>
</dbReference>
<dbReference type="PDB" id="4AZP">
    <property type="method" value="X-ray"/>
    <property type="resolution" value="2.10 A"/>
    <property type="chains" value="A=1-135"/>
</dbReference>
<dbReference type="PDB" id="4AZQ">
    <property type="method" value="X-ray"/>
    <property type="resolution" value="2.00 A"/>
    <property type="chains" value="A=1-135"/>
</dbReference>
<dbReference type="PDB" id="7FYW">
    <property type="method" value="X-ray"/>
    <property type="resolution" value="1.81 A"/>
    <property type="chains" value="A/B/C/D=1-135"/>
</dbReference>
<dbReference type="PDBsum" id="4AZN"/>
<dbReference type="PDBsum" id="4AZO"/>
<dbReference type="PDBsum" id="4AZP"/>
<dbReference type="PDBsum" id="4AZQ"/>
<dbReference type="PDBsum" id="7FYW"/>
<dbReference type="SMR" id="Q05816"/>
<dbReference type="BioGRID" id="200959">
    <property type="interactions" value="6"/>
</dbReference>
<dbReference type="FunCoup" id="Q05816">
    <property type="interactions" value="615"/>
</dbReference>
<dbReference type="IntAct" id="Q05816">
    <property type="interactions" value="1"/>
</dbReference>
<dbReference type="STRING" id="10090.ENSMUSP00000029046"/>
<dbReference type="BindingDB" id="Q05816"/>
<dbReference type="CarbonylDB" id="Q05816"/>
<dbReference type="GlyGen" id="Q05816">
    <property type="glycosylation" value="2 sites, 1 N-linked glycan (1 site), 1 O-linked glycan (1 site)"/>
</dbReference>
<dbReference type="iPTMnet" id="Q05816"/>
<dbReference type="PhosphoSitePlus" id="Q05816"/>
<dbReference type="SwissPalm" id="Q05816"/>
<dbReference type="REPRODUCTION-2DPAGE" id="Q05816"/>
<dbReference type="CPTAC" id="non-CPTAC-3645"/>
<dbReference type="jPOST" id="Q05816"/>
<dbReference type="PaxDb" id="10090-ENSMUSP00000029046"/>
<dbReference type="PeptideAtlas" id="Q05816"/>
<dbReference type="ProteomicsDB" id="275844"/>
<dbReference type="Pumba" id="Q05816"/>
<dbReference type="Antibodypedia" id="25313">
    <property type="antibodies" value="426 antibodies from 37 providers"/>
</dbReference>
<dbReference type="DNASU" id="16592"/>
<dbReference type="Ensembl" id="ENSMUST00000029046.9">
    <property type="protein sequence ID" value="ENSMUSP00000029046.9"/>
    <property type="gene ID" value="ENSMUSG00000027533.11"/>
</dbReference>
<dbReference type="GeneID" id="16592"/>
<dbReference type="KEGG" id="mmu:16592"/>
<dbReference type="UCSC" id="uc008opg.2">
    <property type="organism name" value="mouse"/>
</dbReference>
<dbReference type="AGR" id="MGI:101790"/>
<dbReference type="CTD" id="2171"/>
<dbReference type="MGI" id="MGI:101790">
    <property type="gene designation" value="Fabp5"/>
</dbReference>
<dbReference type="VEuPathDB" id="HostDB:ENSMUSG00000027533"/>
<dbReference type="eggNOG" id="KOG4015">
    <property type="taxonomic scope" value="Eukaryota"/>
</dbReference>
<dbReference type="GeneTree" id="ENSGT00940000154530"/>
<dbReference type="HOGENOM" id="CLU_113772_0_0_1"/>
<dbReference type="InParanoid" id="Q05816"/>
<dbReference type="OMA" id="KMGNMAK"/>
<dbReference type="OrthoDB" id="412780at2759"/>
<dbReference type="PhylomeDB" id="Q05816"/>
<dbReference type="TreeFam" id="TF316894"/>
<dbReference type="Reactome" id="R-MMU-163560">
    <property type="pathway name" value="Triglyceride catabolism"/>
</dbReference>
<dbReference type="Reactome" id="R-MMU-5362517">
    <property type="pathway name" value="Signaling by Retinoic Acid"/>
</dbReference>
<dbReference type="Reactome" id="R-MMU-6798695">
    <property type="pathway name" value="Neutrophil degranulation"/>
</dbReference>
<dbReference type="BioGRID-ORCS" id="16592">
    <property type="hits" value="4 hits in 60 CRISPR screens"/>
</dbReference>
<dbReference type="ChiTaRS" id="Fabp5">
    <property type="organism name" value="mouse"/>
</dbReference>
<dbReference type="EvolutionaryTrace" id="Q05816"/>
<dbReference type="PRO" id="PR:Q05816"/>
<dbReference type="Proteomes" id="UP000000589">
    <property type="component" value="Chromosome 3"/>
</dbReference>
<dbReference type="RNAct" id="Q05816">
    <property type="molecule type" value="protein"/>
</dbReference>
<dbReference type="Bgee" id="ENSMUSG00000027533">
    <property type="expression patterns" value="Expressed in esophagus and 144 other cell types or tissues"/>
</dbReference>
<dbReference type="ExpressionAtlas" id="Q05816">
    <property type="expression patterns" value="baseline and differential"/>
</dbReference>
<dbReference type="GO" id="GO:0005737">
    <property type="term" value="C:cytoplasm"/>
    <property type="evidence" value="ECO:0000314"/>
    <property type="project" value="UniProtKB"/>
</dbReference>
<dbReference type="GO" id="GO:0005615">
    <property type="term" value="C:extracellular space"/>
    <property type="evidence" value="ECO:0000314"/>
    <property type="project" value="UniProtKB"/>
</dbReference>
<dbReference type="GO" id="GO:0098978">
    <property type="term" value="C:glutamatergic synapse"/>
    <property type="evidence" value="ECO:0000314"/>
    <property type="project" value="SynGO"/>
</dbReference>
<dbReference type="GO" id="GO:0005634">
    <property type="term" value="C:nucleus"/>
    <property type="evidence" value="ECO:0000314"/>
    <property type="project" value="UniProtKB"/>
</dbReference>
<dbReference type="GO" id="GO:0099524">
    <property type="term" value="C:postsynaptic cytosol"/>
    <property type="evidence" value="ECO:0000314"/>
    <property type="project" value="SynGO"/>
</dbReference>
<dbReference type="GO" id="GO:0014069">
    <property type="term" value="C:postsynaptic density"/>
    <property type="evidence" value="ECO:0000314"/>
    <property type="project" value="UniProtKB"/>
</dbReference>
<dbReference type="GO" id="GO:0099092">
    <property type="term" value="C:postsynaptic density, intracellular component"/>
    <property type="evidence" value="ECO:0000314"/>
    <property type="project" value="SynGO"/>
</dbReference>
<dbReference type="GO" id="GO:0045202">
    <property type="term" value="C:synapse"/>
    <property type="evidence" value="ECO:0000314"/>
    <property type="project" value="UniProtKB"/>
</dbReference>
<dbReference type="GO" id="GO:0005504">
    <property type="term" value="F:fatty acid binding"/>
    <property type="evidence" value="ECO:0007669"/>
    <property type="project" value="Ensembl"/>
</dbReference>
<dbReference type="GO" id="GO:0042802">
    <property type="term" value="F:identical protein binding"/>
    <property type="evidence" value="ECO:0007669"/>
    <property type="project" value="Ensembl"/>
</dbReference>
<dbReference type="GO" id="GO:0005324">
    <property type="term" value="F:long-chain fatty acid transmembrane transporter activity"/>
    <property type="evidence" value="ECO:0007669"/>
    <property type="project" value="Ensembl"/>
</dbReference>
<dbReference type="GO" id="GO:0001972">
    <property type="term" value="F:retinoic acid binding"/>
    <property type="evidence" value="ECO:0000314"/>
    <property type="project" value="UniProtKB"/>
</dbReference>
<dbReference type="GO" id="GO:0042593">
    <property type="term" value="P:glucose homeostasis"/>
    <property type="evidence" value="ECO:0000315"/>
    <property type="project" value="MGI"/>
</dbReference>
<dbReference type="GO" id="GO:0006006">
    <property type="term" value="P:glucose metabolic process"/>
    <property type="evidence" value="ECO:0000315"/>
    <property type="project" value="MGI"/>
</dbReference>
<dbReference type="GO" id="GO:0006629">
    <property type="term" value="P:lipid metabolic process"/>
    <property type="evidence" value="ECO:0000315"/>
    <property type="project" value="MGI"/>
</dbReference>
<dbReference type="GO" id="GO:1990379">
    <property type="term" value="P:lipid transport across blood-brain barrier"/>
    <property type="evidence" value="ECO:0007669"/>
    <property type="project" value="Ensembl"/>
</dbReference>
<dbReference type="GO" id="GO:0010829">
    <property type="term" value="P:negative regulation of D-glucose transmembrane transport"/>
    <property type="evidence" value="ECO:0000315"/>
    <property type="project" value="MGI"/>
</dbReference>
<dbReference type="GO" id="GO:0006656">
    <property type="term" value="P:phosphatidylcholine biosynthetic process"/>
    <property type="evidence" value="ECO:0000316"/>
    <property type="project" value="MGI"/>
</dbReference>
<dbReference type="GO" id="GO:0120162">
    <property type="term" value="P:positive regulation of cold-induced thermogenesis"/>
    <property type="evidence" value="ECO:0000316"/>
    <property type="project" value="YuBioLab"/>
</dbReference>
<dbReference type="GO" id="GO:0035360">
    <property type="term" value="P:positive regulation of peroxisome proliferator activated receptor signaling pathway"/>
    <property type="evidence" value="ECO:0000315"/>
    <property type="project" value="UniProtKB"/>
</dbReference>
<dbReference type="GO" id="GO:0031392">
    <property type="term" value="P:regulation of prostaglandin biosynthetic process"/>
    <property type="evidence" value="ECO:0000315"/>
    <property type="project" value="UniProtKB"/>
</dbReference>
<dbReference type="GO" id="GO:0099178">
    <property type="term" value="P:regulation of retrograde trans-synaptic signaling by endocanabinoid"/>
    <property type="evidence" value="ECO:0000314"/>
    <property type="project" value="UniProtKB"/>
</dbReference>
<dbReference type="GO" id="GO:0051930">
    <property type="term" value="P:regulation of sensory perception of pain"/>
    <property type="evidence" value="ECO:0000315"/>
    <property type="project" value="UniProtKB"/>
</dbReference>
<dbReference type="GO" id="GO:0098921">
    <property type="term" value="P:retrograde trans-synaptic signaling by endocannabinoid"/>
    <property type="evidence" value="ECO:0000314"/>
    <property type="project" value="SynGO"/>
</dbReference>
<dbReference type="CDD" id="cd19468">
    <property type="entry name" value="FABP5"/>
    <property type="match status" value="1"/>
</dbReference>
<dbReference type="FunFam" id="2.40.128.20:FF:000001">
    <property type="entry name" value="Fatty acid-binding protein, adipocyte"/>
    <property type="match status" value="1"/>
</dbReference>
<dbReference type="Gene3D" id="2.40.128.20">
    <property type="match status" value="1"/>
</dbReference>
<dbReference type="InterPro" id="IPR012674">
    <property type="entry name" value="Calycin"/>
</dbReference>
<dbReference type="InterPro" id="IPR000463">
    <property type="entry name" value="Fatty_acid-bd"/>
</dbReference>
<dbReference type="InterPro" id="IPR031259">
    <property type="entry name" value="ILBP"/>
</dbReference>
<dbReference type="InterPro" id="IPR000566">
    <property type="entry name" value="Lipocln_cytosolic_FA-bd_dom"/>
</dbReference>
<dbReference type="PANTHER" id="PTHR11955">
    <property type="entry name" value="FATTY ACID BINDING PROTEIN"/>
    <property type="match status" value="1"/>
</dbReference>
<dbReference type="Pfam" id="PF00061">
    <property type="entry name" value="Lipocalin"/>
    <property type="match status" value="1"/>
</dbReference>
<dbReference type="PRINTS" id="PR00178">
    <property type="entry name" value="FATTYACIDBP"/>
</dbReference>
<dbReference type="SUPFAM" id="SSF50814">
    <property type="entry name" value="Lipocalins"/>
    <property type="match status" value="1"/>
</dbReference>
<dbReference type="PROSITE" id="PS00214">
    <property type="entry name" value="FABP"/>
    <property type="match status" value="1"/>
</dbReference>
<feature type="initiator methionine" description="Removed" evidence="3">
    <location>
        <position position="1"/>
    </location>
</feature>
<feature type="chain" id="PRO_0000067378" description="Fatty acid-binding protein 5">
    <location>
        <begin position="2"/>
        <end position="135"/>
    </location>
</feature>
<feature type="short sequence motif" description="Nuclear localization signal" evidence="3">
    <location>
        <begin position="24"/>
        <end position="34"/>
    </location>
</feature>
<feature type="binding site" evidence="6 18">
    <location>
        <position position="43"/>
    </location>
    <ligand>
        <name>1-eicosanoylglycerol</name>
        <dbReference type="ChEBI" id="CHEBI:142495"/>
    </ligand>
</feature>
<feature type="binding site" evidence="6 18">
    <location>
        <position position="56"/>
    </location>
    <ligand>
        <name>1-eicosanoylglycerol</name>
        <dbReference type="ChEBI" id="CHEBI:142495"/>
    </ligand>
</feature>
<feature type="binding site" evidence="6 18">
    <location>
        <position position="109"/>
    </location>
    <ligand>
        <name>1-eicosanoylglycerol</name>
        <dbReference type="ChEBI" id="CHEBI:142495"/>
    </ligand>
</feature>
<feature type="binding site" evidence="3">
    <location>
        <begin position="129"/>
        <end position="131"/>
    </location>
    <ligand>
        <name>(9Z,12Z)-octadecadienoate</name>
        <dbReference type="ChEBI" id="CHEBI:30245"/>
    </ligand>
</feature>
<feature type="binding site" evidence="6 17 18">
    <location>
        <begin position="129"/>
        <end position="131"/>
    </location>
    <ligand>
        <name>1-eicosanoylglycerol</name>
        <dbReference type="ChEBI" id="CHEBI:142495"/>
    </ligand>
</feature>
<feature type="binding site" evidence="3">
    <location>
        <position position="131"/>
    </location>
    <ligand>
        <name>hexadecanoate</name>
        <dbReference type="ChEBI" id="CHEBI:7896"/>
    </ligand>
</feature>
<feature type="binding site" evidence="6 17">
    <location>
        <position position="131"/>
    </location>
    <ligand>
        <name>N-eicosanoyl ethanolamine</name>
        <dbReference type="ChEBI" id="CHEBI:85253"/>
    </ligand>
</feature>
<feature type="modified residue" description="N-acetylalanine" evidence="3">
    <location>
        <position position="2"/>
    </location>
</feature>
<feature type="modified residue" description="Phosphoserine" evidence="2">
    <location>
        <position position="3"/>
    </location>
</feature>
<feature type="modified residue" description="Phosphotyrosine" evidence="3">
    <location>
        <position position="131"/>
    </location>
</feature>
<feature type="disulfide bond" evidence="3">
    <location>
        <begin position="120"/>
        <end position="127"/>
    </location>
</feature>
<feature type="helix" evidence="19">
    <location>
        <begin position="4"/>
        <end position="7"/>
    </location>
</feature>
<feature type="strand" evidence="19">
    <location>
        <begin position="9"/>
        <end position="18"/>
    </location>
</feature>
<feature type="helix" evidence="19">
    <location>
        <begin position="19"/>
        <end position="26"/>
    </location>
</feature>
<feature type="helix" evidence="19">
    <location>
        <begin position="30"/>
        <end position="38"/>
    </location>
</feature>
<feature type="strand" evidence="19">
    <location>
        <begin position="42"/>
        <end position="48"/>
    </location>
</feature>
<feature type="strand" evidence="19">
    <location>
        <begin position="51"/>
        <end position="58"/>
    </location>
</feature>
<feature type="strand" evidence="19">
    <location>
        <begin position="61"/>
        <end position="68"/>
    </location>
</feature>
<feature type="strand" evidence="19">
    <location>
        <begin position="73"/>
        <end position="76"/>
    </location>
</feature>
<feature type="strand" evidence="19">
    <location>
        <begin position="82"/>
        <end position="90"/>
    </location>
</feature>
<feature type="strand" evidence="19">
    <location>
        <begin position="93"/>
        <end position="100"/>
    </location>
</feature>
<feature type="strand" evidence="19">
    <location>
        <begin position="103"/>
        <end position="112"/>
    </location>
</feature>
<feature type="strand" evidence="19">
    <location>
        <begin position="115"/>
        <end position="122"/>
    </location>
</feature>
<feature type="strand" evidence="19">
    <location>
        <begin position="125"/>
        <end position="133"/>
    </location>
</feature>
<sequence length="135" mass="15137">MASLKDLEGKWRLMESHGFEEYMKELGVGLALRKMAAMAKPDCIITCDGNNITVKTESTVKTTVFSCNLGEKFDETTADGRKTETVCTFQDGALVQHQQWDGKESTITRKLKDGKMIVECVMNNATCTRVYEKVQ</sequence>